<protein>
    <recommendedName>
        <fullName evidence="1">Adenylosuccinate synthetase</fullName>
        <shortName evidence="1">AMPSase</shortName>
        <shortName evidence="1">AdSS</shortName>
        <ecNumber evidence="1">6.3.4.4</ecNumber>
    </recommendedName>
    <alternativeName>
        <fullName evidence="1">IMP--aspartate ligase</fullName>
    </alternativeName>
</protein>
<accession>Q7MWW8</accession>
<evidence type="ECO:0000255" key="1">
    <source>
        <dbReference type="HAMAP-Rule" id="MF_00011"/>
    </source>
</evidence>
<name>PURA_PORGI</name>
<dbReference type="EC" id="6.3.4.4" evidence="1"/>
<dbReference type="EMBL" id="AE015924">
    <property type="protein sequence ID" value="AAQ65661.1"/>
    <property type="molecule type" value="Genomic_DNA"/>
</dbReference>
<dbReference type="RefSeq" id="WP_005873852.1">
    <property type="nucleotide sequence ID" value="NC_002950.2"/>
</dbReference>
<dbReference type="SMR" id="Q7MWW8"/>
<dbReference type="STRING" id="242619.PG_0464"/>
<dbReference type="EnsemblBacteria" id="AAQ65661">
    <property type="protein sequence ID" value="AAQ65661"/>
    <property type="gene ID" value="PG_0464"/>
</dbReference>
<dbReference type="KEGG" id="pgi:PG_0464"/>
<dbReference type="PATRIC" id="fig|242619.8.peg.423"/>
<dbReference type="eggNOG" id="COG0104">
    <property type="taxonomic scope" value="Bacteria"/>
</dbReference>
<dbReference type="HOGENOM" id="CLU_029848_0_0_10"/>
<dbReference type="BioCyc" id="PGIN242619:G1G02-430-MONOMER"/>
<dbReference type="UniPathway" id="UPA00075">
    <property type="reaction ID" value="UER00335"/>
</dbReference>
<dbReference type="Proteomes" id="UP000000588">
    <property type="component" value="Chromosome"/>
</dbReference>
<dbReference type="GO" id="GO:0005737">
    <property type="term" value="C:cytoplasm"/>
    <property type="evidence" value="ECO:0007669"/>
    <property type="project" value="UniProtKB-SubCell"/>
</dbReference>
<dbReference type="GO" id="GO:0004019">
    <property type="term" value="F:adenylosuccinate synthase activity"/>
    <property type="evidence" value="ECO:0007669"/>
    <property type="project" value="UniProtKB-UniRule"/>
</dbReference>
<dbReference type="GO" id="GO:0005525">
    <property type="term" value="F:GTP binding"/>
    <property type="evidence" value="ECO:0007669"/>
    <property type="project" value="UniProtKB-UniRule"/>
</dbReference>
<dbReference type="GO" id="GO:0000287">
    <property type="term" value="F:magnesium ion binding"/>
    <property type="evidence" value="ECO:0007669"/>
    <property type="project" value="UniProtKB-UniRule"/>
</dbReference>
<dbReference type="GO" id="GO:0044208">
    <property type="term" value="P:'de novo' AMP biosynthetic process"/>
    <property type="evidence" value="ECO:0007669"/>
    <property type="project" value="UniProtKB-UniRule"/>
</dbReference>
<dbReference type="GO" id="GO:0046040">
    <property type="term" value="P:IMP metabolic process"/>
    <property type="evidence" value="ECO:0007669"/>
    <property type="project" value="TreeGrafter"/>
</dbReference>
<dbReference type="CDD" id="cd03108">
    <property type="entry name" value="AdSS"/>
    <property type="match status" value="1"/>
</dbReference>
<dbReference type="FunFam" id="1.10.300.10:FF:000001">
    <property type="entry name" value="Adenylosuccinate synthetase"/>
    <property type="match status" value="1"/>
</dbReference>
<dbReference type="FunFam" id="3.90.170.10:FF:000001">
    <property type="entry name" value="Adenylosuccinate synthetase"/>
    <property type="match status" value="1"/>
</dbReference>
<dbReference type="Gene3D" id="3.40.440.10">
    <property type="entry name" value="Adenylosuccinate Synthetase, subunit A, domain 1"/>
    <property type="match status" value="1"/>
</dbReference>
<dbReference type="Gene3D" id="1.10.300.10">
    <property type="entry name" value="Adenylosuccinate Synthetase, subunit A, domain 2"/>
    <property type="match status" value="1"/>
</dbReference>
<dbReference type="Gene3D" id="3.90.170.10">
    <property type="entry name" value="Adenylosuccinate Synthetase, subunit A, domain 3"/>
    <property type="match status" value="1"/>
</dbReference>
<dbReference type="HAMAP" id="MF_00011">
    <property type="entry name" value="Adenylosucc_synth"/>
    <property type="match status" value="1"/>
</dbReference>
<dbReference type="InterPro" id="IPR018220">
    <property type="entry name" value="Adenylosuccin_syn_GTP-bd"/>
</dbReference>
<dbReference type="InterPro" id="IPR033128">
    <property type="entry name" value="Adenylosuccin_syn_Lys_AS"/>
</dbReference>
<dbReference type="InterPro" id="IPR042109">
    <property type="entry name" value="Adenylosuccinate_synth_dom1"/>
</dbReference>
<dbReference type="InterPro" id="IPR042110">
    <property type="entry name" value="Adenylosuccinate_synth_dom2"/>
</dbReference>
<dbReference type="InterPro" id="IPR042111">
    <property type="entry name" value="Adenylosuccinate_synth_dom3"/>
</dbReference>
<dbReference type="InterPro" id="IPR001114">
    <property type="entry name" value="Adenylosuccinate_synthetase"/>
</dbReference>
<dbReference type="InterPro" id="IPR027417">
    <property type="entry name" value="P-loop_NTPase"/>
</dbReference>
<dbReference type="NCBIfam" id="NF002223">
    <property type="entry name" value="PRK01117.1"/>
    <property type="match status" value="1"/>
</dbReference>
<dbReference type="NCBIfam" id="TIGR00184">
    <property type="entry name" value="purA"/>
    <property type="match status" value="1"/>
</dbReference>
<dbReference type="PANTHER" id="PTHR11846">
    <property type="entry name" value="ADENYLOSUCCINATE SYNTHETASE"/>
    <property type="match status" value="1"/>
</dbReference>
<dbReference type="PANTHER" id="PTHR11846:SF0">
    <property type="entry name" value="ADENYLOSUCCINATE SYNTHETASE"/>
    <property type="match status" value="1"/>
</dbReference>
<dbReference type="Pfam" id="PF00709">
    <property type="entry name" value="Adenylsucc_synt"/>
    <property type="match status" value="1"/>
</dbReference>
<dbReference type="SMART" id="SM00788">
    <property type="entry name" value="Adenylsucc_synt"/>
    <property type="match status" value="1"/>
</dbReference>
<dbReference type="SUPFAM" id="SSF52540">
    <property type="entry name" value="P-loop containing nucleoside triphosphate hydrolases"/>
    <property type="match status" value="1"/>
</dbReference>
<dbReference type="PROSITE" id="PS01266">
    <property type="entry name" value="ADENYLOSUCCIN_SYN_1"/>
    <property type="match status" value="1"/>
</dbReference>
<dbReference type="PROSITE" id="PS00513">
    <property type="entry name" value="ADENYLOSUCCIN_SYN_2"/>
    <property type="match status" value="1"/>
</dbReference>
<gene>
    <name evidence="1" type="primary">purA</name>
    <name type="ordered locus">PG_0464</name>
</gene>
<keyword id="KW-0963">Cytoplasm</keyword>
<keyword id="KW-0342">GTP-binding</keyword>
<keyword id="KW-0436">Ligase</keyword>
<keyword id="KW-0460">Magnesium</keyword>
<keyword id="KW-0479">Metal-binding</keyword>
<keyword id="KW-0547">Nucleotide-binding</keyword>
<keyword id="KW-0658">Purine biosynthesis</keyword>
<keyword id="KW-1185">Reference proteome</keyword>
<reference key="1">
    <citation type="journal article" date="2003" name="J. Bacteriol.">
        <title>Complete genome sequence of the oral pathogenic bacterium Porphyromonas gingivalis strain W83.</title>
        <authorList>
            <person name="Nelson K.E."/>
            <person name="Fleischmann R.D."/>
            <person name="DeBoy R.T."/>
            <person name="Paulsen I.T."/>
            <person name="Fouts D.E."/>
            <person name="Eisen J.A."/>
            <person name="Daugherty S.C."/>
            <person name="Dodson R.J."/>
            <person name="Durkin A.S."/>
            <person name="Gwinn M.L."/>
            <person name="Haft D.H."/>
            <person name="Kolonay J.F."/>
            <person name="Nelson W.C."/>
            <person name="Mason T.M."/>
            <person name="Tallon L."/>
            <person name="Gray J."/>
            <person name="Granger D."/>
            <person name="Tettelin H."/>
            <person name="Dong H."/>
            <person name="Galvin J.L."/>
            <person name="Duncan M.J."/>
            <person name="Dewhirst F.E."/>
            <person name="Fraser C.M."/>
        </authorList>
    </citation>
    <scope>NUCLEOTIDE SEQUENCE [LARGE SCALE GENOMIC DNA]</scope>
    <source>
        <strain>ATCC BAA-308 / W83</strain>
    </source>
</reference>
<proteinExistence type="inferred from homology"/>
<organism>
    <name type="scientific">Porphyromonas gingivalis (strain ATCC BAA-308 / W83)</name>
    <dbReference type="NCBI Taxonomy" id="242619"/>
    <lineage>
        <taxon>Bacteria</taxon>
        <taxon>Pseudomonadati</taxon>
        <taxon>Bacteroidota</taxon>
        <taxon>Bacteroidia</taxon>
        <taxon>Bacteroidales</taxon>
        <taxon>Porphyromonadaceae</taxon>
        <taxon>Porphyromonas</taxon>
    </lineage>
</organism>
<comment type="function">
    <text evidence="1">Plays an important role in the de novo pathway of purine nucleotide biosynthesis. Catalyzes the first committed step in the biosynthesis of AMP from IMP.</text>
</comment>
<comment type="catalytic activity">
    <reaction evidence="1">
        <text>IMP + L-aspartate + GTP = N(6)-(1,2-dicarboxyethyl)-AMP + GDP + phosphate + 2 H(+)</text>
        <dbReference type="Rhea" id="RHEA:15753"/>
        <dbReference type="ChEBI" id="CHEBI:15378"/>
        <dbReference type="ChEBI" id="CHEBI:29991"/>
        <dbReference type="ChEBI" id="CHEBI:37565"/>
        <dbReference type="ChEBI" id="CHEBI:43474"/>
        <dbReference type="ChEBI" id="CHEBI:57567"/>
        <dbReference type="ChEBI" id="CHEBI:58053"/>
        <dbReference type="ChEBI" id="CHEBI:58189"/>
        <dbReference type="EC" id="6.3.4.4"/>
    </reaction>
</comment>
<comment type="cofactor">
    <cofactor evidence="1">
        <name>Mg(2+)</name>
        <dbReference type="ChEBI" id="CHEBI:18420"/>
    </cofactor>
    <text evidence="1">Binds 1 Mg(2+) ion per subunit.</text>
</comment>
<comment type="pathway">
    <text evidence="1">Purine metabolism; AMP biosynthesis via de novo pathway; AMP from IMP: step 1/2.</text>
</comment>
<comment type="subunit">
    <text evidence="1">Homodimer.</text>
</comment>
<comment type="subcellular location">
    <subcellularLocation>
        <location evidence="1">Cytoplasm</location>
    </subcellularLocation>
</comment>
<comment type="similarity">
    <text evidence="1">Belongs to the adenylosuccinate synthetase family.</text>
</comment>
<feature type="chain" id="PRO_0000095209" description="Adenylosuccinate synthetase">
    <location>
        <begin position="1"/>
        <end position="423"/>
    </location>
</feature>
<feature type="active site" description="Proton acceptor" evidence="1">
    <location>
        <position position="14"/>
    </location>
</feature>
<feature type="active site" description="Proton donor" evidence="1">
    <location>
        <position position="42"/>
    </location>
</feature>
<feature type="binding site" evidence="1">
    <location>
        <begin position="13"/>
        <end position="19"/>
    </location>
    <ligand>
        <name>GTP</name>
        <dbReference type="ChEBI" id="CHEBI:37565"/>
    </ligand>
</feature>
<feature type="binding site" description="in other chain" evidence="1">
    <location>
        <begin position="14"/>
        <end position="17"/>
    </location>
    <ligand>
        <name>IMP</name>
        <dbReference type="ChEBI" id="CHEBI:58053"/>
        <note>ligand shared between dimeric partners</note>
    </ligand>
</feature>
<feature type="binding site" evidence="1">
    <location>
        <position position="14"/>
    </location>
    <ligand>
        <name>Mg(2+)</name>
        <dbReference type="ChEBI" id="CHEBI:18420"/>
    </ligand>
</feature>
<feature type="binding site" description="in other chain" evidence="1">
    <location>
        <begin position="39"/>
        <end position="42"/>
    </location>
    <ligand>
        <name>IMP</name>
        <dbReference type="ChEBI" id="CHEBI:58053"/>
        <note>ligand shared between dimeric partners</note>
    </ligand>
</feature>
<feature type="binding site" evidence="1">
    <location>
        <begin position="41"/>
        <end position="43"/>
    </location>
    <ligand>
        <name>GTP</name>
        <dbReference type="ChEBI" id="CHEBI:37565"/>
    </ligand>
</feature>
<feature type="binding site" evidence="1">
    <location>
        <position position="41"/>
    </location>
    <ligand>
        <name>Mg(2+)</name>
        <dbReference type="ChEBI" id="CHEBI:18420"/>
    </ligand>
</feature>
<feature type="binding site" description="in other chain" evidence="1">
    <location>
        <position position="130"/>
    </location>
    <ligand>
        <name>IMP</name>
        <dbReference type="ChEBI" id="CHEBI:58053"/>
        <note>ligand shared between dimeric partners</note>
    </ligand>
</feature>
<feature type="binding site" evidence="1">
    <location>
        <position position="144"/>
    </location>
    <ligand>
        <name>IMP</name>
        <dbReference type="ChEBI" id="CHEBI:58053"/>
        <note>ligand shared between dimeric partners</note>
    </ligand>
</feature>
<feature type="binding site" description="in other chain" evidence="1">
    <location>
        <position position="223"/>
    </location>
    <ligand>
        <name>IMP</name>
        <dbReference type="ChEBI" id="CHEBI:58053"/>
        <note>ligand shared between dimeric partners</note>
    </ligand>
</feature>
<feature type="binding site" description="in other chain" evidence="1">
    <location>
        <position position="238"/>
    </location>
    <ligand>
        <name>IMP</name>
        <dbReference type="ChEBI" id="CHEBI:58053"/>
        <note>ligand shared between dimeric partners</note>
    </ligand>
</feature>
<feature type="binding site" evidence="1">
    <location>
        <begin position="298"/>
        <end position="304"/>
    </location>
    <ligand>
        <name>substrate</name>
    </ligand>
</feature>
<feature type="binding site" description="in other chain" evidence="1">
    <location>
        <position position="302"/>
    </location>
    <ligand>
        <name>IMP</name>
        <dbReference type="ChEBI" id="CHEBI:58053"/>
        <note>ligand shared between dimeric partners</note>
    </ligand>
</feature>
<feature type="binding site" evidence="1">
    <location>
        <position position="304"/>
    </location>
    <ligand>
        <name>GTP</name>
        <dbReference type="ChEBI" id="CHEBI:37565"/>
    </ligand>
</feature>
<feature type="binding site" evidence="1">
    <location>
        <begin position="410"/>
        <end position="412"/>
    </location>
    <ligand>
        <name>GTP</name>
        <dbReference type="ChEBI" id="CHEBI:37565"/>
    </ligand>
</feature>
<sequence length="423" mass="46574">MEKVDVLLGLQWGDEGKGKIVDVLTPHYDIVARFQGGPNAGHTLEFNGEKYVLRSIPSGIFQGEKTNVIGNGVVLDPLLFKEEAEALARSGHDLTKRLVISRKAHLIMPTHRLLDAANEMAKGSGKIGTTGKGIGPTYTDKVSRNGLRVGDLEHGFEEAYSVAKERHLRILNSLNYPTDKLADLEERWMEATKYLRKFEFVDSEFLINGALLSGKKVLAEGAQGSLLDIDFGSYPFVTSSNTICAGCCTGLGVAPRNVGDVYGIFKAYCTRVGAGPFPTELFDETGDKLCELGREFGSVTGRKRRCGWIDLVALRYTIMLNGVTKLIMMKSDVMDLFPTIKACVAYEIDGKETRNFPFHLTEGVTPVYKELPGWQQSMTNVVSEADFPKEFSDYIAFLEKELGVGIAIVSVGPDREQTIIRQA</sequence>